<accession>B7WN72</accession>
<accession>Q09493</accession>
<accession>Q7JMK1</accession>
<proteinExistence type="evidence at protein level"/>
<evidence type="ECO:0000255" key="1"/>
<evidence type="ECO:0000255" key="2">
    <source>
        <dbReference type="PROSITE-ProRule" id="PRU00143"/>
    </source>
</evidence>
<evidence type="ECO:0000255" key="3">
    <source>
        <dbReference type="PROSITE-ProRule" id="PRU00184"/>
    </source>
</evidence>
<evidence type="ECO:0000256" key="4">
    <source>
        <dbReference type="SAM" id="MobiDB-lite"/>
    </source>
</evidence>
<evidence type="ECO:0000269" key="5">
    <source>
    </source>
</evidence>
<evidence type="ECO:0000269" key="6">
    <source>
    </source>
</evidence>
<evidence type="ECO:0000269" key="7">
    <source>
    </source>
</evidence>
<evidence type="ECO:0000303" key="8">
    <source>
    </source>
</evidence>
<evidence type="ECO:0000305" key="9"/>
<evidence type="ECO:0000305" key="10">
    <source>
    </source>
</evidence>
<evidence type="ECO:0000312" key="11">
    <source>
        <dbReference type="Proteomes" id="UP000001940"/>
    </source>
</evidence>
<evidence type="ECO:0000312" key="12">
    <source>
        <dbReference type="WormBase" id="C33B4.3a"/>
    </source>
</evidence>
<evidence type="ECO:0000312" key="13">
    <source>
        <dbReference type="WormBase" id="C33B4.3b"/>
    </source>
</evidence>
<evidence type="ECO:0000312" key="14">
    <source>
        <dbReference type="WormBase" id="C33B4.3c"/>
    </source>
</evidence>
<reference evidence="11" key="1">
    <citation type="journal article" date="1998" name="Science">
        <title>Genome sequence of the nematode C. elegans: a platform for investigating biology.</title>
        <authorList>
            <consortium name="The C. elegans sequencing consortium"/>
        </authorList>
    </citation>
    <scope>NUCLEOTIDE SEQUENCE [LARGE SCALE GENOMIC DNA]</scope>
    <source>
        <strain evidence="11">Bristol N2</strain>
    </source>
</reference>
<reference evidence="9" key="2">
    <citation type="journal article" date="2004" name="FEBS Lett.">
        <title>SHN-1, a Shank homologue in C. elegans, affects defecation rhythm via the inositol-1,4,5-trisphosphate receptor.</title>
        <authorList>
            <person name="Jee C."/>
            <person name="Lee J."/>
            <person name="Lee J.I."/>
            <person name="Lee W.H."/>
            <person name="Park B.J."/>
            <person name="Yu J.R."/>
            <person name="Park E."/>
            <person name="Kim E."/>
            <person name="Ahnn J."/>
        </authorList>
    </citation>
    <scope>FUNCTION</scope>
    <scope>SUBCELLULAR LOCATION</scope>
    <scope>TISSUE SPECIFICITY</scope>
    <scope>DEVELOPMENTAL STAGE</scope>
    <scope>DISRUPTION PHENOTYPE</scope>
</reference>
<reference evidence="9" key="3">
    <citation type="journal article" date="2011" name="Mol. Cells">
        <title>ANK repeat-domain of SHN-1 is indispensable for in vivo SHN-1 function in C. elegans.</title>
        <authorList>
            <person name="Oh W.C."/>
            <person name="Song H.O."/>
            <person name="Cho J.H."/>
            <person name="Park B.J."/>
        </authorList>
    </citation>
    <scope>FUNCTION</scope>
    <scope>DISRUPTION PHENOTYPE</scope>
</reference>
<reference evidence="9" key="4">
    <citation type="journal article" date="2017" name="Elife">
        <title>Shank is a dose-dependent regulator of Cav1 calcium current and CREB target expression.</title>
        <authorList>
            <person name="Pym E."/>
            <person name="Sasidharan N."/>
            <person name="Thompson-Peer K.L."/>
            <person name="Simon D.J."/>
            <person name="Anselmo A."/>
            <person name="Sadreyev R."/>
            <person name="Hall Q."/>
            <person name="Nurrish S."/>
            <person name="Kaplan J.M."/>
        </authorList>
    </citation>
    <scope>FUNCTION</scope>
    <scope>INTERACTION WITH EGL-19</scope>
    <scope>DISRUPTION PHENOTYPE</scope>
</reference>
<comment type="function">
    <text evidence="5 6 7">Scaffold protein that most likely acts in the postsynaptic density (PSD) of excitatory synapses which orchestrates synapse formation and maintenance at neuromuscular junctions (PubMed:28477407). Associates with and trafficks the L-type calcium channel egl-19 to the cell surface of body wall muscles to ensure the function of the calcium channel and therefore maintain the Ca(2+) current density (PubMed:28477407). The maintenance of Ca(2+) also allows for the downstream regulation of Ca(2+)-induced expression of genes such as gem-4 (PubMed:28477407). Plays a role in the regulation of the defecation cycle, and this may be in association with the inositol trisphosphate (IP3) receptor itr-1, which in turn mediates periodic calcium release and muscle contractions (PubMed:15013747, PubMed:21191812). Required for normal fertility and pharyngeal pumping (PubMed:21191812).</text>
</comment>
<comment type="subunit">
    <text evidence="7">Interacts (via PDZ domain) with egl-19 (via C-terminus).</text>
</comment>
<comment type="interaction">
    <interactant intactId="EBI-2914750">
        <id>B7WN72</id>
    </interactant>
    <interactant intactId="EBI-2422468">
        <id>Q8MXV3</id>
        <label>ccep-135</label>
    </interactant>
    <organismsDiffer>false</organismsDiffer>
    <experiments>2</experiments>
</comment>
<comment type="subcellular location">
    <subcellularLocation>
        <location evidence="5">Cell projection</location>
        <location evidence="5">Pseudopodium</location>
    </subcellularLocation>
    <subcellularLocation>
        <location evidence="5">Cytoplasmic vesicle</location>
    </subcellularLocation>
    <subcellularLocation>
        <location evidence="10">Postsynaptic density</location>
    </subcellularLocation>
    <text evidence="5">Localizes to sperm pseudopodium.</text>
</comment>
<comment type="alternative products">
    <event type="alternative splicing"/>
    <isoform>
        <id>B7WN72-1</id>
        <name evidence="14">c</name>
        <sequence type="displayed"/>
    </isoform>
    <isoform>
        <id>B7WN72-2</id>
        <name evidence="12">a</name>
        <sequence type="described" ref="VSP_059097"/>
    </isoform>
    <isoform>
        <id>B7WN72-3</id>
        <name evidence="13">b</name>
        <sequence type="described" ref="VSP_059097 VSP_059098 VSP_059099"/>
    </isoform>
</comment>
<comment type="tissue specificity">
    <text evidence="5">Expressed in the pharynx, pharyngeal-intestinal valve, intestine, rectal epithelial cells, tail neurons, nerve cord and sperm.</text>
</comment>
<comment type="developmental stage">
    <text evidence="5">Expressed throughout development from embryos to adults. Highly expressed in the nerve cord of embryos. Expressed in vulval epithelial cells of L4 stage hermaphrodites.</text>
</comment>
<comment type="disruption phenotype">
    <text evidence="5 6 7">Animals are viable, but produce a reduced brood size, have a prolonged defecation cycle and a reduced pharyngeal pumping rate as compared to wild-type (PubMed:21191812). Reduced male fertility which may be due to irregular male mating behavior and defective sperm function (PubMed:21191812). Reduced cell surface abundance of the L-type egl-19 calcium channel in body wall muscles, which results in a 20% decrease in Ca(2+) current density (PubMed:28477407). In response to the nicotinic acetylcholine agonist levamisole, there is reduced expression of genes such as gem-4 (PubMed:28477407). Irregular postsynaptic transmission at neuromuscular junctions characterized by larger stimulus-evoked excitatory postsynaptic currents as compared to wild-type (PubMed:28477407). RNAi-mediated knockdown results in viable animals with no visible phenotype (PubMed:15013747). However, there is a slight reduction in brood size, but there are no visible defects in terms of embryonic viability, growth or morphology in their resulting progeny (PubMed:15013747). RNAi-mediated knockdown in an itr-1(sa73) loss of function mutant background results in a longer defecation cycle as compared to the itr-1 single mutant (PubMed:15013747).</text>
</comment>
<comment type="miscellaneous">
    <text evidence="9">In contrast to the mammalian Shank proteins, does not contain a SH3 domain.</text>
</comment>
<comment type="similarity">
    <text evidence="9">Belongs to the SHANK family.</text>
</comment>
<keyword id="KW-0025">Alternative splicing</keyword>
<keyword id="KW-0040">ANK repeat</keyword>
<keyword id="KW-0966">Cell projection</keyword>
<keyword id="KW-0968">Cytoplasmic vesicle</keyword>
<keyword id="KW-1185">Reference proteome</keyword>
<keyword id="KW-0677">Repeat</keyword>
<keyword id="KW-0770">Synapse</keyword>
<feature type="chain" id="PRO_0000441737" description="Protein shank" evidence="9">
    <location>
        <begin position="1"/>
        <end position="1140"/>
    </location>
</feature>
<feature type="repeat" description="ANK 1" evidence="1">
    <location>
        <begin position="144"/>
        <end position="174"/>
    </location>
</feature>
<feature type="repeat" description="ANK 2" evidence="1">
    <location>
        <begin position="178"/>
        <end position="207"/>
    </location>
</feature>
<feature type="repeat" description="ANK 3" evidence="1">
    <location>
        <begin position="211"/>
        <end position="242"/>
    </location>
</feature>
<feature type="repeat" description="ANK 4" evidence="1">
    <location>
        <begin position="246"/>
        <end position="275"/>
    </location>
</feature>
<feature type="repeat" description="ANK 5" evidence="1">
    <location>
        <begin position="279"/>
        <end position="309"/>
    </location>
</feature>
<feature type="repeat" description="ANK 6" evidence="1">
    <location>
        <begin position="312"/>
        <end position="341"/>
    </location>
</feature>
<feature type="domain" description="PDZ" evidence="2">
    <location>
        <begin position="436"/>
        <end position="529"/>
    </location>
</feature>
<feature type="domain" description="SAM" evidence="3">
    <location>
        <begin position="1078"/>
        <end position="1140"/>
    </location>
</feature>
<feature type="region of interest" description="Disordered" evidence="4">
    <location>
        <begin position="337"/>
        <end position="412"/>
    </location>
</feature>
<feature type="region of interest" description="Disordered" evidence="4">
    <location>
        <begin position="640"/>
        <end position="673"/>
    </location>
</feature>
<feature type="region of interest" description="Disordered" evidence="4">
    <location>
        <begin position="687"/>
        <end position="856"/>
    </location>
</feature>
<feature type="region of interest" description="Disordered" evidence="4">
    <location>
        <begin position="875"/>
        <end position="902"/>
    </location>
</feature>
<feature type="region of interest" description="Disordered" evidence="4">
    <location>
        <begin position="961"/>
        <end position="993"/>
    </location>
</feature>
<feature type="region of interest" description="Disordered" evidence="4">
    <location>
        <begin position="1008"/>
        <end position="1028"/>
    </location>
</feature>
<feature type="compositionally biased region" description="Basic residues" evidence="4">
    <location>
        <begin position="351"/>
        <end position="364"/>
    </location>
</feature>
<feature type="compositionally biased region" description="Low complexity" evidence="4">
    <location>
        <begin position="388"/>
        <end position="412"/>
    </location>
</feature>
<feature type="compositionally biased region" description="Polar residues" evidence="4">
    <location>
        <begin position="640"/>
        <end position="657"/>
    </location>
</feature>
<feature type="compositionally biased region" description="Polar residues" evidence="4">
    <location>
        <begin position="687"/>
        <end position="704"/>
    </location>
</feature>
<feature type="compositionally biased region" description="Low complexity" evidence="4">
    <location>
        <begin position="761"/>
        <end position="775"/>
    </location>
</feature>
<feature type="compositionally biased region" description="Low complexity" evidence="4">
    <location>
        <begin position="784"/>
        <end position="793"/>
    </location>
</feature>
<feature type="compositionally biased region" description="Pro residues" evidence="4">
    <location>
        <begin position="794"/>
        <end position="806"/>
    </location>
</feature>
<feature type="compositionally biased region" description="Pro residues" evidence="4">
    <location>
        <begin position="823"/>
        <end position="847"/>
    </location>
</feature>
<feature type="compositionally biased region" description="Polar residues" evidence="4">
    <location>
        <begin position="964"/>
        <end position="974"/>
    </location>
</feature>
<feature type="compositionally biased region" description="Basic and acidic residues" evidence="4">
    <location>
        <begin position="977"/>
        <end position="988"/>
    </location>
</feature>
<feature type="compositionally biased region" description="Low complexity" evidence="4">
    <location>
        <begin position="1015"/>
        <end position="1028"/>
    </location>
</feature>
<feature type="splice variant" id="VSP_059097" description="In isoform a and isoform b." evidence="9">
    <location>
        <begin position="546"/>
        <end position="575"/>
    </location>
</feature>
<feature type="splice variant" id="VSP_059098" description="In isoform b." evidence="9">
    <original>MSVASSSTAS</original>
    <variation>VVKYHSNTRR</variation>
    <location>
        <begin position="1014"/>
        <end position="1023"/>
    </location>
</feature>
<feature type="splice variant" id="VSP_059099" description="In isoform b." evidence="9">
    <location>
        <begin position="1024"/>
        <end position="1140"/>
    </location>
</feature>
<gene>
    <name evidence="8 14" type="primary">shn-1</name>
    <name evidence="14" type="ORF">C33B4.3</name>
</gene>
<sequence>MNQEEDTVNLQIFVPELNVRKFLAVTQNDFIWDVKRKLLATLPQALPQAFNYGLFLPPCDGRAGKFLLEDRTIRDYPFTDCVPYLELKYKKRVYKMLNLDEKQLKAMHTKGQLKKFMDYVQQKNNEKVEKMCSQGLDANFHDAQGETPLTLAAGIPNNRAVIVSLIGGGAHVDFRNSEGQTAMHKAAFLSSFENVKTLIELGASPNYRDPIGLTPLYYNMLTADSNDQVAEILLREAADIGVTDMHGNHEIHQACKNGLTKHVEHLLYFGGQIDAENVNGNSPLHVCAVNNRPECARVLLFRGADHLAVNKQGQTALHVSHIVGNPGVADVVQAHNPKSSVPYRGTPQYSTRRRLSSTITRRRSMSQSSICSQDVYRTPQSVRKGPMSAAPSPSPSRSSRTTITPSEYGTMRRSGMDSMRGGGMIAAGHETNIARILVIPRGVKGFGFILRGAKHVAMPLNFEPTAQVPALQFFEGVDMSGMAVRAGLRPGDYLLEIDGIDVRRCSHDEVVEFIQQAGDTITLKVITVDVADMSRGGTIVHRPPTASSRHSLVFTPTPSAIYSSTKASSVYRMRFDTHDAHGVDYYAPNEIRNAYSESRHASVRQRPGSGRRISAAELENLMVRQRVPSVQGSPYQMQYDQESLNGGYSSKKYNSVSDMKRRKGQRNVVASSAGLNRSTFEQAAPTTSTFEYNCSSRSTPQLSRMDSFDSFDDEDEMPAPPPASYISPDLQRDSSMQRSEYSRPFRPTSRPKTPPPPPPMQHQNHQNHQYQQQHPSLPRSASTPQPIQQQQSSIPPPPPPPPPPHCEPTMVHVEFTPPSTSSVPPPPPPLPPISSGAPPPPPPPPPGGLMHVAASAPVLMSNSKGISADALKSVQLKKAEPRETSAASVSNNNNNNNNSTTDFQMDLKNALAKRRSKVAHDVDEDEERESRFEGLSLRETVRENVVERGKGIQNIGIVNKKDSGYTSSRTSLEPSESEEKDHRPHFSLDHSPNVQRVTLISQHLEDNYGQKDNMSVASSSTASSSSTVDLTKPGCFVVPSHVIPPVDYDDDPDSGTGDSDGEIRCSEISFEHKKVDVWSVDDVIGWLSSLHLSEYTPAFRSQRINGRCLRQCDRSRFTQLGVTRIAHRQIIESALRGLLQ</sequence>
<protein>
    <recommendedName>
        <fullName evidence="8">Protein shank</fullName>
    </recommendedName>
</protein>
<organism evidence="11">
    <name type="scientific">Caenorhabditis elegans</name>
    <dbReference type="NCBI Taxonomy" id="6239"/>
    <lineage>
        <taxon>Eukaryota</taxon>
        <taxon>Metazoa</taxon>
        <taxon>Ecdysozoa</taxon>
        <taxon>Nematoda</taxon>
        <taxon>Chromadorea</taxon>
        <taxon>Rhabditida</taxon>
        <taxon>Rhabditina</taxon>
        <taxon>Rhabditomorpha</taxon>
        <taxon>Rhabditoidea</taxon>
        <taxon>Rhabditidae</taxon>
        <taxon>Peloderinae</taxon>
        <taxon>Caenorhabditis</taxon>
    </lineage>
</organism>
<name>SHANK_CAEEL</name>
<dbReference type="EMBL" id="BX284602">
    <property type="protein sequence ID" value="CAA88324.1"/>
    <property type="molecule type" value="Genomic_DNA"/>
</dbReference>
<dbReference type="EMBL" id="BX284602">
    <property type="protein sequence ID" value="CAE54886.1"/>
    <property type="molecule type" value="Genomic_DNA"/>
</dbReference>
<dbReference type="EMBL" id="BX284602">
    <property type="protein sequence ID" value="CAV31765.1"/>
    <property type="molecule type" value="Genomic_DNA"/>
</dbReference>
<dbReference type="PIR" id="T19673">
    <property type="entry name" value="T19673"/>
</dbReference>
<dbReference type="RefSeq" id="NP_001022006.1">
    <molecule id="B7WN72-2"/>
    <property type="nucleotide sequence ID" value="NM_001026835.7"/>
</dbReference>
<dbReference type="RefSeq" id="NP_001022007.1">
    <molecule id="B7WN72-3"/>
    <property type="nucleotide sequence ID" value="NM_001026836.6"/>
</dbReference>
<dbReference type="RefSeq" id="NP_001254297.1">
    <property type="nucleotide sequence ID" value="NM_001267368.1"/>
</dbReference>
<dbReference type="RefSeq" id="NP_001379494.1">
    <molecule id="B7WN72-1"/>
    <property type="nucleotide sequence ID" value="NM_001393191.1"/>
</dbReference>
<dbReference type="SMR" id="B7WN72"/>
<dbReference type="FunCoup" id="B7WN72">
    <property type="interactions" value="209"/>
</dbReference>
<dbReference type="IntAct" id="B7WN72">
    <property type="interactions" value="18"/>
</dbReference>
<dbReference type="STRING" id="6239.C33B4.3c.1"/>
<dbReference type="PaxDb" id="6239-C33B4.3c"/>
<dbReference type="PeptideAtlas" id="B7WN72"/>
<dbReference type="EnsemblMetazoa" id="C33B4.3a.1">
    <molecule id="B7WN72-2"/>
    <property type="protein sequence ID" value="C33B4.3a.1"/>
    <property type="gene ID" value="WBGene00006444"/>
</dbReference>
<dbReference type="EnsemblMetazoa" id="C33B4.3b.1">
    <molecule id="B7WN72-3"/>
    <property type="protein sequence ID" value="C33B4.3b.1"/>
    <property type="gene ID" value="WBGene00006444"/>
</dbReference>
<dbReference type="EnsemblMetazoa" id="C33B4.3c.1">
    <molecule id="B7WN72-1"/>
    <property type="protein sequence ID" value="C33B4.3c.1"/>
    <property type="gene ID" value="WBGene00006444"/>
</dbReference>
<dbReference type="GeneID" id="174739"/>
<dbReference type="KEGG" id="cel:CELE_C33B4.3"/>
<dbReference type="UCSC" id="C33B4.3a">
    <property type="organism name" value="c. elegans"/>
</dbReference>
<dbReference type="AGR" id="WB:WBGene00006444"/>
<dbReference type="CTD" id="174739"/>
<dbReference type="WormBase" id="C33B4.3a">
    <molecule id="B7WN72-2"/>
    <property type="protein sequence ID" value="CE01508"/>
    <property type="gene ID" value="WBGene00006444"/>
    <property type="gene designation" value="shn-1"/>
</dbReference>
<dbReference type="WormBase" id="C33B4.3b">
    <molecule id="B7WN72-3"/>
    <property type="protein sequence ID" value="CE36107"/>
    <property type="gene ID" value="WBGene00006444"/>
    <property type="gene designation" value="shn-1"/>
</dbReference>
<dbReference type="WormBase" id="C33B4.3c">
    <molecule id="B7WN72-1"/>
    <property type="protein sequence ID" value="CE43434"/>
    <property type="gene ID" value="WBGene00006444"/>
    <property type="gene designation" value="shn-1"/>
</dbReference>
<dbReference type="eggNOG" id="KOG0504">
    <property type="taxonomic scope" value="Eukaryota"/>
</dbReference>
<dbReference type="eggNOG" id="KOG4375">
    <property type="taxonomic scope" value="Eukaryota"/>
</dbReference>
<dbReference type="GeneTree" id="ENSGT00940000153561"/>
<dbReference type="InParanoid" id="B7WN72"/>
<dbReference type="OMA" id="RCSHDEV"/>
<dbReference type="OrthoDB" id="445896at2759"/>
<dbReference type="PhylomeDB" id="B7WN72"/>
<dbReference type="Reactome" id="R-CEL-6794361">
    <property type="pathway name" value="Neurexins and neuroligins"/>
</dbReference>
<dbReference type="PRO" id="PR:B7WN72"/>
<dbReference type="Proteomes" id="UP000001940">
    <property type="component" value="Chromosome II"/>
</dbReference>
<dbReference type="Bgee" id="WBGene00006444">
    <property type="expression patterns" value="Expressed in pharyngeal muscle cell (C elegans) and 3 other cell types or tissues"/>
</dbReference>
<dbReference type="GO" id="GO:0031410">
    <property type="term" value="C:cytoplasmic vesicle"/>
    <property type="evidence" value="ECO:0007669"/>
    <property type="project" value="UniProtKB-KW"/>
</dbReference>
<dbReference type="GO" id="GO:0043197">
    <property type="term" value="C:dendritic spine"/>
    <property type="evidence" value="ECO:0000318"/>
    <property type="project" value="GO_Central"/>
</dbReference>
<dbReference type="GO" id="GO:0014069">
    <property type="term" value="C:postsynaptic density"/>
    <property type="evidence" value="ECO:0000318"/>
    <property type="project" value="GO_Central"/>
</dbReference>
<dbReference type="GO" id="GO:0031143">
    <property type="term" value="C:pseudopodium"/>
    <property type="evidence" value="ECO:0007669"/>
    <property type="project" value="UniProtKB-SubCell"/>
</dbReference>
<dbReference type="GO" id="GO:0035255">
    <property type="term" value="F:ionotropic glutamate receptor binding"/>
    <property type="evidence" value="ECO:0000318"/>
    <property type="project" value="GO_Central"/>
</dbReference>
<dbReference type="GO" id="GO:0030160">
    <property type="term" value="F:synaptic receptor adaptor activity"/>
    <property type="evidence" value="ECO:0000318"/>
    <property type="project" value="GO_Central"/>
</dbReference>
<dbReference type="GO" id="GO:0030421">
    <property type="term" value="P:defecation"/>
    <property type="evidence" value="ECO:0000316"/>
    <property type="project" value="WormBase"/>
</dbReference>
<dbReference type="GO" id="GO:0007622">
    <property type="term" value="P:rhythmic behavior"/>
    <property type="evidence" value="ECO:0000316"/>
    <property type="project" value="WormBase"/>
</dbReference>
<dbReference type="CDD" id="cd17091">
    <property type="entry name" value="FERM_F0_SHANK"/>
    <property type="match status" value="1"/>
</dbReference>
<dbReference type="CDD" id="cd06746">
    <property type="entry name" value="PDZ_SHANK1_3-like"/>
    <property type="match status" value="1"/>
</dbReference>
<dbReference type="CDD" id="cd09506">
    <property type="entry name" value="SAM_Shank1_2_3"/>
    <property type="match status" value="1"/>
</dbReference>
<dbReference type="FunFam" id="1.10.150.50:FF:000111">
    <property type="entry name" value="Predicted protein"/>
    <property type="match status" value="1"/>
</dbReference>
<dbReference type="FunFam" id="1.25.40.20:FF:001138">
    <property type="entry name" value="Protein shank"/>
    <property type="match status" value="1"/>
</dbReference>
<dbReference type="Gene3D" id="2.30.42.10">
    <property type="match status" value="1"/>
</dbReference>
<dbReference type="Gene3D" id="1.25.40.20">
    <property type="entry name" value="Ankyrin repeat-containing domain"/>
    <property type="match status" value="2"/>
</dbReference>
<dbReference type="Gene3D" id="3.10.20.90">
    <property type="entry name" value="Phosphatidylinositol 3-kinase Catalytic Subunit, Chain A, domain 1"/>
    <property type="match status" value="1"/>
</dbReference>
<dbReference type="Gene3D" id="1.10.150.50">
    <property type="entry name" value="Transcription Factor, Ets-1"/>
    <property type="match status" value="1"/>
</dbReference>
<dbReference type="InterPro" id="IPR002110">
    <property type="entry name" value="Ankyrin_rpt"/>
</dbReference>
<dbReference type="InterPro" id="IPR036770">
    <property type="entry name" value="Ankyrin_rpt-contain_sf"/>
</dbReference>
<dbReference type="InterPro" id="IPR001478">
    <property type="entry name" value="PDZ"/>
</dbReference>
<dbReference type="InterPro" id="IPR036034">
    <property type="entry name" value="PDZ_sf"/>
</dbReference>
<dbReference type="InterPro" id="IPR001660">
    <property type="entry name" value="SAM"/>
</dbReference>
<dbReference type="InterPro" id="IPR013761">
    <property type="entry name" value="SAM/pointed_sf"/>
</dbReference>
<dbReference type="InterPro" id="IPR051569">
    <property type="entry name" value="SHANK"/>
</dbReference>
<dbReference type="PANTHER" id="PTHR24135:SF28">
    <property type="entry name" value="LD13733P"/>
    <property type="match status" value="1"/>
</dbReference>
<dbReference type="PANTHER" id="PTHR24135">
    <property type="entry name" value="SH3 AND MULTIPLE ANKYRIN REPEAT DOMAINS PROTEIN"/>
    <property type="match status" value="1"/>
</dbReference>
<dbReference type="Pfam" id="PF12796">
    <property type="entry name" value="Ank_2"/>
    <property type="match status" value="2"/>
</dbReference>
<dbReference type="Pfam" id="PF00595">
    <property type="entry name" value="PDZ"/>
    <property type="match status" value="1"/>
</dbReference>
<dbReference type="Pfam" id="PF00536">
    <property type="entry name" value="SAM_1"/>
    <property type="match status" value="1"/>
</dbReference>
<dbReference type="SMART" id="SM00248">
    <property type="entry name" value="ANK"/>
    <property type="match status" value="6"/>
</dbReference>
<dbReference type="SMART" id="SM00228">
    <property type="entry name" value="PDZ"/>
    <property type="match status" value="1"/>
</dbReference>
<dbReference type="SMART" id="SM00454">
    <property type="entry name" value="SAM"/>
    <property type="match status" value="1"/>
</dbReference>
<dbReference type="SUPFAM" id="SSF48403">
    <property type="entry name" value="Ankyrin repeat"/>
    <property type="match status" value="1"/>
</dbReference>
<dbReference type="SUPFAM" id="SSF50156">
    <property type="entry name" value="PDZ domain-like"/>
    <property type="match status" value="1"/>
</dbReference>
<dbReference type="SUPFAM" id="SSF47769">
    <property type="entry name" value="SAM/Pointed domain"/>
    <property type="match status" value="1"/>
</dbReference>
<dbReference type="PROSITE" id="PS50297">
    <property type="entry name" value="ANK_REP_REGION"/>
    <property type="match status" value="1"/>
</dbReference>
<dbReference type="PROSITE" id="PS50088">
    <property type="entry name" value="ANK_REPEAT"/>
    <property type="match status" value="4"/>
</dbReference>
<dbReference type="PROSITE" id="PS50106">
    <property type="entry name" value="PDZ"/>
    <property type="match status" value="1"/>
</dbReference>
<dbReference type="PROSITE" id="PS50105">
    <property type="entry name" value="SAM_DOMAIN"/>
    <property type="match status" value="1"/>
</dbReference>